<protein>
    <recommendedName>
        <fullName evidence="1">Hydroxyethylthiazole kinase</fullName>
        <ecNumber evidence="1">2.7.1.50</ecNumber>
    </recommendedName>
    <alternativeName>
        <fullName evidence="1">4-methyl-5-beta-hydroxyethylthiazole kinase</fullName>
        <shortName evidence="1">TH kinase</shortName>
        <shortName evidence="1">Thz kinase</shortName>
    </alternativeName>
</protein>
<accession>A4VUB1</accession>
<name>THIM_STRSY</name>
<organism>
    <name type="scientific">Streptococcus suis (strain 05ZYH33)</name>
    <dbReference type="NCBI Taxonomy" id="391295"/>
    <lineage>
        <taxon>Bacteria</taxon>
        <taxon>Bacillati</taxon>
        <taxon>Bacillota</taxon>
        <taxon>Bacilli</taxon>
        <taxon>Lactobacillales</taxon>
        <taxon>Streptococcaceae</taxon>
        <taxon>Streptococcus</taxon>
    </lineage>
</organism>
<gene>
    <name evidence="1" type="primary">thiM</name>
    <name type="ordered locus">SSU05_0734</name>
</gene>
<keyword id="KW-0067">ATP-binding</keyword>
<keyword id="KW-0418">Kinase</keyword>
<keyword id="KW-0460">Magnesium</keyword>
<keyword id="KW-0479">Metal-binding</keyword>
<keyword id="KW-0547">Nucleotide-binding</keyword>
<keyword id="KW-0784">Thiamine biosynthesis</keyword>
<keyword id="KW-0808">Transferase</keyword>
<sequence>MYLEKLRSQNPLTICITNDVVKNFTANGLLALGASPAMSEYPEDLEDLLPYTKGLLINTGTLTNETWELYKSALDIAEKYGVPTVLDPVAAGAGAYRKKVTLDLLHHHTISLVRGNAGEIAALIGESIETKGVDSAQIDNVGELALRANQQLGIPVVITGKKDAVAVNHQVRILENGSELMPLVTGTGCLLGAVLAAFIHLADEDSLLDCLEEVLSAYSIAGEMAEQKTSLPGTFQIEFINSLYAIQSEEVEENKKVIHYE</sequence>
<dbReference type="EC" id="2.7.1.50" evidence="1"/>
<dbReference type="EMBL" id="CP000407">
    <property type="protein sequence ID" value="ABP89700.1"/>
    <property type="molecule type" value="Genomic_DNA"/>
</dbReference>
<dbReference type="SMR" id="A4VUB1"/>
<dbReference type="STRING" id="391295.SSU05_0734"/>
<dbReference type="KEGG" id="ssu:SSU05_0734"/>
<dbReference type="eggNOG" id="COG2145">
    <property type="taxonomic scope" value="Bacteria"/>
</dbReference>
<dbReference type="HOGENOM" id="CLU_019943_0_2_9"/>
<dbReference type="UniPathway" id="UPA00060">
    <property type="reaction ID" value="UER00139"/>
</dbReference>
<dbReference type="GO" id="GO:0005524">
    <property type="term" value="F:ATP binding"/>
    <property type="evidence" value="ECO:0007669"/>
    <property type="project" value="UniProtKB-UniRule"/>
</dbReference>
<dbReference type="GO" id="GO:0004417">
    <property type="term" value="F:hydroxyethylthiazole kinase activity"/>
    <property type="evidence" value="ECO:0007669"/>
    <property type="project" value="UniProtKB-UniRule"/>
</dbReference>
<dbReference type="GO" id="GO:0000287">
    <property type="term" value="F:magnesium ion binding"/>
    <property type="evidence" value="ECO:0007669"/>
    <property type="project" value="UniProtKB-UniRule"/>
</dbReference>
<dbReference type="GO" id="GO:0009228">
    <property type="term" value="P:thiamine biosynthetic process"/>
    <property type="evidence" value="ECO:0007669"/>
    <property type="project" value="UniProtKB-KW"/>
</dbReference>
<dbReference type="GO" id="GO:0009229">
    <property type="term" value="P:thiamine diphosphate biosynthetic process"/>
    <property type="evidence" value="ECO:0007669"/>
    <property type="project" value="UniProtKB-UniRule"/>
</dbReference>
<dbReference type="CDD" id="cd01170">
    <property type="entry name" value="THZ_kinase"/>
    <property type="match status" value="1"/>
</dbReference>
<dbReference type="Gene3D" id="3.40.1190.20">
    <property type="match status" value="1"/>
</dbReference>
<dbReference type="HAMAP" id="MF_00228">
    <property type="entry name" value="Thz_kinase"/>
    <property type="match status" value="1"/>
</dbReference>
<dbReference type="InterPro" id="IPR000417">
    <property type="entry name" value="Hyethyz_kinase"/>
</dbReference>
<dbReference type="InterPro" id="IPR029056">
    <property type="entry name" value="Ribokinase-like"/>
</dbReference>
<dbReference type="NCBIfam" id="NF006830">
    <property type="entry name" value="PRK09355.1"/>
    <property type="match status" value="1"/>
</dbReference>
<dbReference type="Pfam" id="PF02110">
    <property type="entry name" value="HK"/>
    <property type="match status" value="1"/>
</dbReference>
<dbReference type="PIRSF" id="PIRSF000513">
    <property type="entry name" value="Thz_kinase"/>
    <property type="match status" value="1"/>
</dbReference>
<dbReference type="PRINTS" id="PR01099">
    <property type="entry name" value="HYETHTZKNASE"/>
</dbReference>
<dbReference type="SUPFAM" id="SSF53613">
    <property type="entry name" value="Ribokinase-like"/>
    <property type="match status" value="1"/>
</dbReference>
<comment type="function">
    <text evidence="1">Catalyzes the phosphorylation of the hydroxyl group of 4-methyl-5-beta-hydroxyethylthiazole (THZ).</text>
</comment>
<comment type="catalytic activity">
    <reaction evidence="1">
        <text>5-(2-hydroxyethyl)-4-methylthiazole + ATP = 4-methyl-5-(2-phosphooxyethyl)-thiazole + ADP + H(+)</text>
        <dbReference type="Rhea" id="RHEA:24212"/>
        <dbReference type="ChEBI" id="CHEBI:15378"/>
        <dbReference type="ChEBI" id="CHEBI:17957"/>
        <dbReference type="ChEBI" id="CHEBI:30616"/>
        <dbReference type="ChEBI" id="CHEBI:58296"/>
        <dbReference type="ChEBI" id="CHEBI:456216"/>
        <dbReference type="EC" id="2.7.1.50"/>
    </reaction>
</comment>
<comment type="cofactor">
    <cofactor evidence="1">
        <name>Mg(2+)</name>
        <dbReference type="ChEBI" id="CHEBI:18420"/>
    </cofactor>
</comment>
<comment type="pathway">
    <text evidence="1">Cofactor biosynthesis; thiamine diphosphate biosynthesis; 4-methyl-5-(2-phosphoethyl)-thiazole from 5-(2-hydroxyethyl)-4-methylthiazole: step 1/1.</text>
</comment>
<comment type="similarity">
    <text evidence="1">Belongs to the Thz kinase family.</text>
</comment>
<reference key="1">
    <citation type="journal article" date="2007" name="PLoS ONE">
        <title>A glimpse of streptococcal toxic shock syndrome from comparative genomics of S. suis 2 Chinese isolates.</title>
        <authorList>
            <person name="Chen C."/>
            <person name="Tang J."/>
            <person name="Dong W."/>
            <person name="Wang C."/>
            <person name="Feng Y."/>
            <person name="Wang J."/>
            <person name="Zheng F."/>
            <person name="Pan X."/>
            <person name="Liu D."/>
            <person name="Li M."/>
            <person name="Song Y."/>
            <person name="Zhu X."/>
            <person name="Sun H."/>
            <person name="Feng T."/>
            <person name="Guo Z."/>
            <person name="Ju A."/>
            <person name="Ge J."/>
            <person name="Dong Y."/>
            <person name="Sun W."/>
            <person name="Jiang Y."/>
            <person name="Wang J."/>
            <person name="Yan J."/>
            <person name="Yang H."/>
            <person name="Wang X."/>
            <person name="Gao G.F."/>
            <person name="Yang R."/>
            <person name="Wang J."/>
            <person name="Yu J."/>
        </authorList>
    </citation>
    <scope>NUCLEOTIDE SEQUENCE [LARGE SCALE GENOMIC DNA]</scope>
    <source>
        <strain>05ZYH33</strain>
    </source>
</reference>
<proteinExistence type="inferred from homology"/>
<evidence type="ECO:0000255" key="1">
    <source>
        <dbReference type="HAMAP-Rule" id="MF_00228"/>
    </source>
</evidence>
<feature type="chain" id="PRO_0000336572" description="Hydroxyethylthiazole kinase">
    <location>
        <begin position="1"/>
        <end position="261"/>
    </location>
</feature>
<feature type="binding site" evidence="1">
    <location>
        <position position="38"/>
    </location>
    <ligand>
        <name>substrate</name>
    </ligand>
</feature>
<feature type="binding site" evidence="1">
    <location>
        <position position="114"/>
    </location>
    <ligand>
        <name>ATP</name>
        <dbReference type="ChEBI" id="CHEBI:30616"/>
    </ligand>
</feature>
<feature type="binding site" evidence="1">
    <location>
        <position position="159"/>
    </location>
    <ligand>
        <name>ATP</name>
        <dbReference type="ChEBI" id="CHEBI:30616"/>
    </ligand>
</feature>
<feature type="binding site" evidence="1">
    <location>
        <position position="186"/>
    </location>
    <ligand>
        <name>substrate</name>
    </ligand>
</feature>